<feature type="initiator methionine" description="Removed" evidence="2">
    <location>
        <position position="1"/>
    </location>
</feature>
<feature type="chain" id="PRO_0000304732" description="Ribosome maturation protein SBDS">
    <location>
        <begin position="2"/>
        <end position="250"/>
    </location>
</feature>
<feature type="modified residue" description="N-acetylserine" evidence="2">
    <location>
        <position position="2"/>
    </location>
</feature>
<reference key="1">
    <citation type="submission" date="2004-11" db="EMBL/GenBank/DDBJ databases">
        <authorList>
            <consortium name="The German cDNA consortium"/>
        </authorList>
    </citation>
    <scope>NUCLEOTIDE SEQUENCE [LARGE SCALE MRNA]</scope>
    <source>
        <tissue>Heart</tissue>
    </source>
</reference>
<gene>
    <name type="primary">SBDS</name>
</gene>
<evidence type="ECO:0000250" key="1"/>
<evidence type="ECO:0000250" key="2">
    <source>
        <dbReference type="UniProtKB" id="Q9Y3A5"/>
    </source>
</evidence>
<evidence type="ECO:0000305" key="3"/>
<protein>
    <recommendedName>
        <fullName>Ribosome maturation protein SBDS</fullName>
    </recommendedName>
    <alternativeName>
        <fullName>Shwachman-Bodian-Diamond syndrome protein homolog</fullName>
    </alternativeName>
</protein>
<proteinExistence type="evidence at transcript level"/>
<keyword id="KW-0007">Acetylation</keyword>
<keyword id="KW-0963">Cytoplasm</keyword>
<keyword id="KW-0206">Cytoskeleton</keyword>
<keyword id="KW-0539">Nucleus</keyword>
<keyword id="KW-1185">Reference proteome</keyword>
<keyword id="KW-0690">Ribosome biogenesis</keyword>
<organism>
    <name type="scientific">Pongo abelii</name>
    <name type="common">Sumatran orangutan</name>
    <name type="synonym">Pongo pygmaeus abelii</name>
    <dbReference type="NCBI Taxonomy" id="9601"/>
    <lineage>
        <taxon>Eukaryota</taxon>
        <taxon>Metazoa</taxon>
        <taxon>Chordata</taxon>
        <taxon>Craniata</taxon>
        <taxon>Vertebrata</taxon>
        <taxon>Euteleostomi</taxon>
        <taxon>Mammalia</taxon>
        <taxon>Eutheria</taxon>
        <taxon>Euarchontoglires</taxon>
        <taxon>Primates</taxon>
        <taxon>Haplorrhini</taxon>
        <taxon>Catarrhini</taxon>
        <taxon>Hominidae</taxon>
        <taxon>Pongo</taxon>
    </lineage>
</organism>
<comment type="function">
    <text evidence="1">Required for the assembly of mature ribosomes and ribosome biogenesis. Together with EFL1, triggers the GTP-dependent release of EIF6 from 60S pre-ribosomes in the cytoplasm, thereby activating ribosomes for translation competence by allowing 80S ribosome assembly and facilitating EIF6 recycling to the nucleus, where it is required for 60S rRNA processing and nuclear export. Required for normal levels of protein synthesis. May play a role in cellular stress resistance. May play a role in cellular response to DNA damage. May play a role in cell proliferation (By similarity).</text>
</comment>
<comment type="subunit">
    <text evidence="2">Associates with the 60S ribosomal subunit. Interacts with NPM1, RPA1 and PRKDC. May interact with NIP7. Found in a complex consisting of the 60S ribosomal subunit, SBDS and EFL1. Interacts with CLN3 (By similarity).</text>
</comment>
<comment type="subcellular location">
    <subcellularLocation>
        <location evidence="1">Cytoplasm</location>
    </subcellularLocation>
    <subcellularLocation>
        <location evidence="1">Nucleus</location>
        <location evidence="1">Nucleolus</location>
    </subcellularLocation>
    <subcellularLocation>
        <location evidence="1">Nucleus</location>
        <location evidence="1">Nucleoplasm</location>
    </subcellularLocation>
    <subcellularLocation>
        <location evidence="1">Cytoplasm</location>
        <location evidence="1">Cytoskeleton</location>
        <location evidence="1">Spindle</location>
    </subcellularLocation>
    <text evidence="1">Primarily detected in the cytoplasm, and at low levels in nucleus. Detected in the nucleolus during G1 and G2 phase of the cell cycle, and diffusely distributed in the nucleus during S phase. Detected at the mitotic spindle. Colocalizes with the microtubule organizing center during interphase (By similarity).</text>
</comment>
<comment type="similarity">
    <text evidence="3">Belongs to the SDO1/SBDS family.</text>
</comment>
<accession>Q5RAZ2</accession>
<sequence length="250" mass="28764">MSIFTPTNQIRLTNVAVVRMKRAGKRFEIACYKNKVVGWRSGVEKDLDEVLQTHSVFVNVSKGQVAKKEDLISAFGTDDQTEICKQILTKGEVQVSDKERHTQLEQMFRDIATIVADKCVNPETKRPYTVILIERAMKDIHYSVKTNKSTKQQALEVIKQLKEKMKIERAHMRLRFILPVNEGKKLKEKLKPLIKVIESEDYGQQLEIVCLIDPGCFREIDELIKKETKGKGSLEVLNLKDVEEGDEKFE</sequence>
<dbReference type="EMBL" id="CR858869">
    <property type="protein sequence ID" value="CAH91068.1"/>
    <property type="molecule type" value="mRNA"/>
</dbReference>
<dbReference type="RefSeq" id="NP_001125618.1">
    <property type="nucleotide sequence ID" value="NM_001132146.1"/>
</dbReference>
<dbReference type="RefSeq" id="XP_063581568.1">
    <property type="nucleotide sequence ID" value="XM_063725498.1"/>
</dbReference>
<dbReference type="BMRB" id="Q5RAZ2"/>
<dbReference type="SMR" id="Q5RAZ2"/>
<dbReference type="FunCoup" id="Q5RAZ2">
    <property type="interactions" value="3353"/>
</dbReference>
<dbReference type="STRING" id="9601.ENSPPYP00000019630"/>
<dbReference type="Ensembl" id="ENSPPYT00000020402.3">
    <property type="protein sequence ID" value="ENSPPYP00000019630.2"/>
    <property type="gene ID" value="ENSPPYG00000017513.3"/>
</dbReference>
<dbReference type="GeneID" id="100172536"/>
<dbReference type="KEGG" id="pon:100172536"/>
<dbReference type="CTD" id="51119"/>
<dbReference type="eggNOG" id="KOG2917">
    <property type="taxonomic scope" value="Eukaryota"/>
</dbReference>
<dbReference type="GeneTree" id="ENSGT00390000008135"/>
<dbReference type="HOGENOM" id="CLU_043216_1_1_1"/>
<dbReference type="InParanoid" id="Q5RAZ2"/>
<dbReference type="OMA" id="AVNPQMD"/>
<dbReference type="OrthoDB" id="10253092at2759"/>
<dbReference type="TreeFam" id="TF300881"/>
<dbReference type="Proteomes" id="UP000001595">
    <property type="component" value="Chromosome 7"/>
</dbReference>
<dbReference type="GO" id="GO:0005737">
    <property type="term" value="C:cytoplasm"/>
    <property type="evidence" value="ECO:0000250"/>
    <property type="project" value="UniProtKB"/>
</dbReference>
<dbReference type="GO" id="GO:0005829">
    <property type="term" value="C:cytosol"/>
    <property type="evidence" value="ECO:0007669"/>
    <property type="project" value="Ensembl"/>
</dbReference>
<dbReference type="GO" id="GO:0005730">
    <property type="term" value="C:nucleolus"/>
    <property type="evidence" value="ECO:0000250"/>
    <property type="project" value="UniProtKB"/>
</dbReference>
<dbReference type="GO" id="GO:0005654">
    <property type="term" value="C:nucleoplasm"/>
    <property type="evidence" value="ECO:0007669"/>
    <property type="project" value="UniProtKB-SubCell"/>
</dbReference>
<dbReference type="GO" id="GO:0000922">
    <property type="term" value="C:spindle pole"/>
    <property type="evidence" value="ECO:0000250"/>
    <property type="project" value="UniProtKB"/>
</dbReference>
<dbReference type="GO" id="GO:0008017">
    <property type="term" value="F:microtubule binding"/>
    <property type="evidence" value="ECO:0000250"/>
    <property type="project" value="UniProtKB"/>
</dbReference>
<dbReference type="GO" id="GO:0043022">
    <property type="term" value="F:ribosome binding"/>
    <property type="evidence" value="ECO:0000250"/>
    <property type="project" value="UniProtKB"/>
</dbReference>
<dbReference type="GO" id="GO:0019843">
    <property type="term" value="F:rRNA binding"/>
    <property type="evidence" value="ECO:0000250"/>
    <property type="project" value="UniProtKB"/>
</dbReference>
<dbReference type="GO" id="GO:0048539">
    <property type="term" value="P:bone marrow development"/>
    <property type="evidence" value="ECO:0000250"/>
    <property type="project" value="UniProtKB"/>
</dbReference>
<dbReference type="GO" id="GO:0030282">
    <property type="term" value="P:bone mineralization"/>
    <property type="evidence" value="ECO:0000250"/>
    <property type="project" value="UniProtKB"/>
</dbReference>
<dbReference type="GO" id="GO:0042256">
    <property type="term" value="P:cytosolic ribosome assembly"/>
    <property type="evidence" value="ECO:0000250"/>
    <property type="project" value="UniProtKB"/>
</dbReference>
<dbReference type="GO" id="GO:0002244">
    <property type="term" value="P:hematopoietic progenitor cell differentiation"/>
    <property type="evidence" value="ECO:0000250"/>
    <property type="project" value="UniProtKB"/>
</dbReference>
<dbReference type="GO" id="GO:0001833">
    <property type="term" value="P:inner cell mass cell proliferation"/>
    <property type="evidence" value="ECO:0007669"/>
    <property type="project" value="Ensembl"/>
</dbReference>
<dbReference type="GO" id="GO:0030595">
    <property type="term" value="P:leukocyte chemotaxis"/>
    <property type="evidence" value="ECO:0000250"/>
    <property type="project" value="UniProtKB"/>
</dbReference>
<dbReference type="GO" id="GO:0007052">
    <property type="term" value="P:mitotic spindle organization"/>
    <property type="evidence" value="ECO:0000250"/>
    <property type="project" value="UniProtKB"/>
</dbReference>
<dbReference type="GO" id="GO:0006364">
    <property type="term" value="P:rRNA processing"/>
    <property type="evidence" value="ECO:0000250"/>
    <property type="project" value="UniProtKB"/>
</dbReference>
<dbReference type="FunFam" id="3.30.70.240:FF:000009">
    <property type="entry name" value="SBDS ribosome maturation factor"/>
    <property type="match status" value="1"/>
</dbReference>
<dbReference type="FunFam" id="1.10.10.900:FF:000001">
    <property type="entry name" value="SBDS, ribosome maturation factor"/>
    <property type="match status" value="1"/>
</dbReference>
<dbReference type="FunFam" id="3.30.1250.10:FF:000001">
    <property type="entry name" value="SBDS, ribosome maturation factor"/>
    <property type="match status" value="1"/>
</dbReference>
<dbReference type="Gene3D" id="3.30.70.240">
    <property type="match status" value="1"/>
</dbReference>
<dbReference type="Gene3D" id="3.30.1250.10">
    <property type="entry name" value="Ribosome maturation protein SBDS, N-terminal domain"/>
    <property type="match status" value="1"/>
</dbReference>
<dbReference type="Gene3D" id="1.10.10.900">
    <property type="entry name" value="SBDS protein C-terminal domain, subdomain 1"/>
    <property type="match status" value="1"/>
</dbReference>
<dbReference type="InterPro" id="IPR018023">
    <property type="entry name" value="Ribosome_mat_SBDS_CS"/>
</dbReference>
<dbReference type="InterPro" id="IPR036786">
    <property type="entry name" value="Ribosome_mat_SBDS_N_sf"/>
</dbReference>
<dbReference type="InterPro" id="IPR002140">
    <property type="entry name" value="Sdo1/SBDS"/>
</dbReference>
<dbReference type="InterPro" id="IPR039100">
    <property type="entry name" value="Sdo1/SBDS-like"/>
</dbReference>
<dbReference type="InterPro" id="IPR046928">
    <property type="entry name" value="SDO1/SBDS_C"/>
</dbReference>
<dbReference type="InterPro" id="IPR018978">
    <property type="entry name" value="SDO1/SBDS_central"/>
</dbReference>
<dbReference type="InterPro" id="IPR037188">
    <property type="entry name" value="Sdo1/SBDS_central_sf"/>
</dbReference>
<dbReference type="InterPro" id="IPR019783">
    <property type="entry name" value="SDO1/SBDS_N"/>
</dbReference>
<dbReference type="NCBIfam" id="TIGR00291">
    <property type="entry name" value="RNA_SBDS"/>
    <property type="match status" value="1"/>
</dbReference>
<dbReference type="PANTHER" id="PTHR10927">
    <property type="entry name" value="RIBOSOME MATURATION PROTEIN SBDS"/>
    <property type="match status" value="1"/>
</dbReference>
<dbReference type="PANTHER" id="PTHR10927:SF6">
    <property type="entry name" value="RIBOSOME MATURATION PROTEIN SBDS"/>
    <property type="match status" value="1"/>
</dbReference>
<dbReference type="Pfam" id="PF20268">
    <property type="entry name" value="SBDS_C"/>
    <property type="match status" value="1"/>
</dbReference>
<dbReference type="Pfam" id="PF09377">
    <property type="entry name" value="SBDS_domain_II"/>
    <property type="match status" value="1"/>
</dbReference>
<dbReference type="Pfam" id="PF01172">
    <property type="entry name" value="SBDS_N"/>
    <property type="match status" value="1"/>
</dbReference>
<dbReference type="SUPFAM" id="SSF89895">
    <property type="entry name" value="FYSH domain"/>
    <property type="match status" value="1"/>
</dbReference>
<dbReference type="SUPFAM" id="SSF109728">
    <property type="entry name" value="Hypothetical protein AF0491, middle domain"/>
    <property type="match status" value="1"/>
</dbReference>
<dbReference type="PROSITE" id="PS01267">
    <property type="entry name" value="UPF0023"/>
    <property type="match status" value="1"/>
</dbReference>
<name>SBDS_PONAB</name>